<feature type="chain" id="PRO_0000151927" description="ATP phosphoribosyltransferase">
    <location>
        <begin position="1"/>
        <end position="211"/>
    </location>
</feature>
<keyword id="KW-0028">Amino-acid biosynthesis</keyword>
<keyword id="KW-0067">ATP-binding</keyword>
<keyword id="KW-0963">Cytoplasm</keyword>
<keyword id="KW-0328">Glycosyltransferase</keyword>
<keyword id="KW-0368">Histidine biosynthesis</keyword>
<keyword id="KW-0547">Nucleotide-binding</keyword>
<keyword id="KW-1185">Reference proteome</keyword>
<keyword id="KW-0808">Transferase</keyword>
<sequence>MLTIALSKGRILDDTLPLLAEAGIVPTENPDKSRKLIIPTTQADVRLLIVRATDVPTYVEHGAADLGVAGKDVLMEYTGQGLYEPLDLQIAKCRLMTAGAIGAVEPKGRLRVATKFVNVAKRYYAEQGRQVDIIKLYGSMELAPLIGLADKIIDVVDTGNTLRANGLEPQELIATISSRLVVNKASMKMQHARIQALIDTLRKAVESRHRC</sequence>
<comment type="function">
    <text evidence="1">Catalyzes the condensation of ATP and 5-phosphoribose 1-diphosphate to form N'-(5'-phosphoribosyl)-ATP (PR-ATP). Has a crucial role in the pathway because the rate of histidine biosynthesis seems to be controlled primarily by regulation of HisG enzymatic activity.</text>
</comment>
<comment type="catalytic activity">
    <reaction evidence="1">
        <text>1-(5-phospho-beta-D-ribosyl)-ATP + diphosphate = 5-phospho-alpha-D-ribose 1-diphosphate + ATP</text>
        <dbReference type="Rhea" id="RHEA:18473"/>
        <dbReference type="ChEBI" id="CHEBI:30616"/>
        <dbReference type="ChEBI" id="CHEBI:33019"/>
        <dbReference type="ChEBI" id="CHEBI:58017"/>
        <dbReference type="ChEBI" id="CHEBI:73183"/>
        <dbReference type="EC" id="2.4.2.17"/>
    </reaction>
</comment>
<comment type="pathway">
    <text evidence="1">Amino-acid biosynthesis; L-histidine biosynthesis; L-histidine from 5-phospho-alpha-D-ribose 1-diphosphate: step 1/9.</text>
</comment>
<comment type="subunit">
    <text evidence="1">Heteromultimer composed of HisG and HisZ subunits.</text>
</comment>
<comment type="subcellular location">
    <subcellularLocation>
        <location evidence="1">Cytoplasm</location>
    </subcellularLocation>
</comment>
<comment type="domain">
    <text>Lacks the C-terminal regulatory region which is replaced by HisZ.</text>
</comment>
<comment type="similarity">
    <text evidence="1">Belongs to the ATP phosphoribosyltransferase family. Short subfamily.</text>
</comment>
<organism>
    <name type="scientific">Pseudomonas syringae pv. tomato (strain ATCC BAA-871 / DC3000)</name>
    <dbReference type="NCBI Taxonomy" id="223283"/>
    <lineage>
        <taxon>Bacteria</taxon>
        <taxon>Pseudomonadati</taxon>
        <taxon>Pseudomonadota</taxon>
        <taxon>Gammaproteobacteria</taxon>
        <taxon>Pseudomonadales</taxon>
        <taxon>Pseudomonadaceae</taxon>
        <taxon>Pseudomonas</taxon>
    </lineage>
</organism>
<evidence type="ECO:0000255" key="1">
    <source>
        <dbReference type="HAMAP-Rule" id="MF_01018"/>
    </source>
</evidence>
<accession>Q87WV4</accession>
<dbReference type="EC" id="2.4.2.17" evidence="1"/>
<dbReference type="EMBL" id="AE016853">
    <property type="protein sequence ID" value="AAO57888.1"/>
    <property type="molecule type" value="Genomic_DNA"/>
</dbReference>
<dbReference type="RefSeq" id="NP_794193.1">
    <property type="nucleotide sequence ID" value="NC_004578.1"/>
</dbReference>
<dbReference type="RefSeq" id="WP_005766526.1">
    <property type="nucleotide sequence ID" value="NC_004578.1"/>
</dbReference>
<dbReference type="SMR" id="Q87WV4"/>
<dbReference type="STRING" id="223283.PSPTO_4439"/>
<dbReference type="GeneID" id="1186120"/>
<dbReference type="KEGG" id="pst:PSPTO_4439"/>
<dbReference type="PATRIC" id="fig|223283.9.peg.4555"/>
<dbReference type="eggNOG" id="COG0040">
    <property type="taxonomic scope" value="Bacteria"/>
</dbReference>
<dbReference type="HOGENOM" id="CLU_038115_2_0_6"/>
<dbReference type="OrthoDB" id="9801867at2"/>
<dbReference type="PhylomeDB" id="Q87WV4"/>
<dbReference type="UniPathway" id="UPA00031">
    <property type="reaction ID" value="UER00006"/>
</dbReference>
<dbReference type="Proteomes" id="UP000002515">
    <property type="component" value="Chromosome"/>
</dbReference>
<dbReference type="GO" id="GO:0005737">
    <property type="term" value="C:cytoplasm"/>
    <property type="evidence" value="ECO:0007669"/>
    <property type="project" value="UniProtKB-SubCell"/>
</dbReference>
<dbReference type="GO" id="GO:0005524">
    <property type="term" value="F:ATP binding"/>
    <property type="evidence" value="ECO:0007669"/>
    <property type="project" value="UniProtKB-KW"/>
</dbReference>
<dbReference type="GO" id="GO:0003879">
    <property type="term" value="F:ATP phosphoribosyltransferase activity"/>
    <property type="evidence" value="ECO:0007669"/>
    <property type="project" value="UniProtKB-UniRule"/>
</dbReference>
<dbReference type="GO" id="GO:0000105">
    <property type="term" value="P:L-histidine biosynthetic process"/>
    <property type="evidence" value="ECO:0007669"/>
    <property type="project" value="UniProtKB-UniRule"/>
</dbReference>
<dbReference type="CDD" id="cd13595">
    <property type="entry name" value="PBP2_HisGs"/>
    <property type="match status" value="1"/>
</dbReference>
<dbReference type="FunFam" id="3.40.190.10:FF:000011">
    <property type="entry name" value="ATP phosphoribosyltransferase"/>
    <property type="match status" value="1"/>
</dbReference>
<dbReference type="FunFam" id="3.40.190.10:FF:000022">
    <property type="entry name" value="ATP phosphoribosyltransferase"/>
    <property type="match status" value="1"/>
</dbReference>
<dbReference type="Gene3D" id="3.40.190.10">
    <property type="entry name" value="Periplasmic binding protein-like II"/>
    <property type="match status" value="2"/>
</dbReference>
<dbReference type="HAMAP" id="MF_01018">
    <property type="entry name" value="HisG_Short"/>
    <property type="match status" value="1"/>
</dbReference>
<dbReference type="InterPro" id="IPR013820">
    <property type="entry name" value="ATP_PRibTrfase_cat"/>
</dbReference>
<dbReference type="InterPro" id="IPR018198">
    <property type="entry name" value="ATP_PRibTrfase_CS"/>
</dbReference>
<dbReference type="InterPro" id="IPR001348">
    <property type="entry name" value="ATP_PRibTrfase_HisG"/>
</dbReference>
<dbReference type="InterPro" id="IPR024893">
    <property type="entry name" value="ATP_PRibTrfase_HisG_short"/>
</dbReference>
<dbReference type="NCBIfam" id="TIGR00070">
    <property type="entry name" value="hisG"/>
    <property type="match status" value="1"/>
</dbReference>
<dbReference type="PANTHER" id="PTHR21403:SF8">
    <property type="entry name" value="ATP PHOSPHORIBOSYLTRANSFERASE"/>
    <property type="match status" value="1"/>
</dbReference>
<dbReference type="PANTHER" id="PTHR21403">
    <property type="entry name" value="ATP PHOSPHORIBOSYLTRANSFERASE ATP-PRTASE"/>
    <property type="match status" value="1"/>
</dbReference>
<dbReference type="Pfam" id="PF01634">
    <property type="entry name" value="HisG"/>
    <property type="match status" value="1"/>
</dbReference>
<dbReference type="SUPFAM" id="SSF53850">
    <property type="entry name" value="Periplasmic binding protein-like II"/>
    <property type="match status" value="1"/>
</dbReference>
<dbReference type="PROSITE" id="PS01316">
    <property type="entry name" value="ATP_P_PHORIBOSYLTR"/>
    <property type="match status" value="1"/>
</dbReference>
<name>HIS1_PSESM</name>
<gene>
    <name evidence="1" type="primary">hisG</name>
    <name type="ordered locus">PSPTO_4439</name>
</gene>
<reference key="1">
    <citation type="journal article" date="2003" name="Proc. Natl. Acad. Sci. U.S.A.">
        <title>The complete genome sequence of the Arabidopsis and tomato pathogen Pseudomonas syringae pv. tomato DC3000.</title>
        <authorList>
            <person name="Buell C.R."/>
            <person name="Joardar V."/>
            <person name="Lindeberg M."/>
            <person name="Selengut J."/>
            <person name="Paulsen I.T."/>
            <person name="Gwinn M.L."/>
            <person name="Dodson R.J."/>
            <person name="DeBoy R.T."/>
            <person name="Durkin A.S."/>
            <person name="Kolonay J.F."/>
            <person name="Madupu R."/>
            <person name="Daugherty S.C."/>
            <person name="Brinkac L.M."/>
            <person name="Beanan M.J."/>
            <person name="Haft D.H."/>
            <person name="Nelson W.C."/>
            <person name="Davidsen T.M."/>
            <person name="Zafar N."/>
            <person name="Zhou L."/>
            <person name="Liu J."/>
            <person name="Yuan Q."/>
            <person name="Khouri H.M."/>
            <person name="Fedorova N.B."/>
            <person name="Tran B."/>
            <person name="Russell D."/>
            <person name="Berry K.J."/>
            <person name="Utterback T.R."/>
            <person name="Van Aken S.E."/>
            <person name="Feldblyum T.V."/>
            <person name="D'Ascenzo M."/>
            <person name="Deng W.-L."/>
            <person name="Ramos A.R."/>
            <person name="Alfano J.R."/>
            <person name="Cartinhour S."/>
            <person name="Chatterjee A.K."/>
            <person name="Delaney T.P."/>
            <person name="Lazarowitz S.G."/>
            <person name="Martin G.B."/>
            <person name="Schneider D.J."/>
            <person name="Tang X."/>
            <person name="Bender C.L."/>
            <person name="White O."/>
            <person name="Fraser C.M."/>
            <person name="Collmer A."/>
        </authorList>
    </citation>
    <scope>NUCLEOTIDE SEQUENCE [LARGE SCALE GENOMIC DNA]</scope>
    <source>
        <strain>ATCC BAA-871 / DC3000</strain>
    </source>
</reference>
<protein>
    <recommendedName>
        <fullName evidence="1">ATP phosphoribosyltransferase</fullName>
        <shortName evidence="1">ATP-PRT</shortName>
        <shortName evidence="1">ATP-PRTase</shortName>
        <ecNumber evidence="1">2.4.2.17</ecNumber>
    </recommendedName>
</protein>
<proteinExistence type="inferred from homology"/>